<reference key="1">
    <citation type="journal article" date="2007" name="Science">
        <title>Legumes symbioses: absence of nod genes in photosynthetic bradyrhizobia.</title>
        <authorList>
            <person name="Giraud E."/>
            <person name="Moulin L."/>
            <person name="Vallenet D."/>
            <person name="Barbe V."/>
            <person name="Cytryn E."/>
            <person name="Avarre J.-C."/>
            <person name="Jaubert M."/>
            <person name="Simon D."/>
            <person name="Cartieaux F."/>
            <person name="Prin Y."/>
            <person name="Bena G."/>
            <person name="Hannibal L."/>
            <person name="Fardoux J."/>
            <person name="Kojadinovic M."/>
            <person name="Vuillet L."/>
            <person name="Lajus A."/>
            <person name="Cruveiller S."/>
            <person name="Rouy Z."/>
            <person name="Mangenot S."/>
            <person name="Segurens B."/>
            <person name="Dossat C."/>
            <person name="Franck W.L."/>
            <person name="Chang W.-S."/>
            <person name="Saunders E."/>
            <person name="Bruce D."/>
            <person name="Richardson P."/>
            <person name="Normand P."/>
            <person name="Dreyfus B."/>
            <person name="Pignol D."/>
            <person name="Stacey G."/>
            <person name="Emerich D."/>
            <person name="Vermeglio A."/>
            <person name="Medigue C."/>
            <person name="Sadowsky M."/>
        </authorList>
    </citation>
    <scope>NUCLEOTIDE SEQUENCE [LARGE SCALE GENOMIC DNA]</scope>
    <source>
        <strain>ORS 278</strain>
    </source>
</reference>
<name>BIOB_BRASO</name>
<evidence type="ECO:0000255" key="1">
    <source>
        <dbReference type="HAMAP-Rule" id="MF_01694"/>
    </source>
</evidence>
<evidence type="ECO:0000255" key="2">
    <source>
        <dbReference type="PROSITE-ProRule" id="PRU01266"/>
    </source>
</evidence>
<protein>
    <recommendedName>
        <fullName evidence="1">Biotin synthase</fullName>
        <ecNumber evidence="1">2.8.1.6</ecNumber>
    </recommendedName>
</protein>
<dbReference type="EC" id="2.8.1.6" evidence="1"/>
<dbReference type="EMBL" id="CU234118">
    <property type="protein sequence ID" value="CAL76249.1"/>
    <property type="molecule type" value="Genomic_DNA"/>
</dbReference>
<dbReference type="SMR" id="A4YQS3"/>
<dbReference type="STRING" id="114615.BRADO2424"/>
<dbReference type="KEGG" id="bra:BRADO2424"/>
<dbReference type="eggNOG" id="COG0502">
    <property type="taxonomic scope" value="Bacteria"/>
</dbReference>
<dbReference type="HOGENOM" id="CLU_033172_1_2_5"/>
<dbReference type="UniPathway" id="UPA00078">
    <property type="reaction ID" value="UER00162"/>
</dbReference>
<dbReference type="Proteomes" id="UP000001994">
    <property type="component" value="Chromosome"/>
</dbReference>
<dbReference type="GO" id="GO:0051537">
    <property type="term" value="F:2 iron, 2 sulfur cluster binding"/>
    <property type="evidence" value="ECO:0007669"/>
    <property type="project" value="UniProtKB-KW"/>
</dbReference>
<dbReference type="GO" id="GO:0051539">
    <property type="term" value="F:4 iron, 4 sulfur cluster binding"/>
    <property type="evidence" value="ECO:0007669"/>
    <property type="project" value="UniProtKB-KW"/>
</dbReference>
<dbReference type="GO" id="GO:0004076">
    <property type="term" value="F:biotin synthase activity"/>
    <property type="evidence" value="ECO:0007669"/>
    <property type="project" value="UniProtKB-UniRule"/>
</dbReference>
<dbReference type="GO" id="GO:0005506">
    <property type="term" value="F:iron ion binding"/>
    <property type="evidence" value="ECO:0007669"/>
    <property type="project" value="UniProtKB-UniRule"/>
</dbReference>
<dbReference type="GO" id="GO:0009102">
    <property type="term" value="P:biotin biosynthetic process"/>
    <property type="evidence" value="ECO:0007669"/>
    <property type="project" value="UniProtKB-UniRule"/>
</dbReference>
<dbReference type="CDD" id="cd01335">
    <property type="entry name" value="Radical_SAM"/>
    <property type="match status" value="1"/>
</dbReference>
<dbReference type="FunFam" id="3.20.20.70:FF:000026">
    <property type="entry name" value="Biotin synthase"/>
    <property type="match status" value="1"/>
</dbReference>
<dbReference type="Gene3D" id="3.20.20.70">
    <property type="entry name" value="Aldolase class I"/>
    <property type="match status" value="1"/>
</dbReference>
<dbReference type="HAMAP" id="MF_01694">
    <property type="entry name" value="BioB"/>
    <property type="match status" value="1"/>
</dbReference>
<dbReference type="InterPro" id="IPR013785">
    <property type="entry name" value="Aldolase_TIM"/>
</dbReference>
<dbReference type="InterPro" id="IPR010722">
    <property type="entry name" value="BATS_dom"/>
</dbReference>
<dbReference type="InterPro" id="IPR002684">
    <property type="entry name" value="Biotin_synth/BioAB"/>
</dbReference>
<dbReference type="InterPro" id="IPR024177">
    <property type="entry name" value="Biotin_synthase"/>
</dbReference>
<dbReference type="InterPro" id="IPR006638">
    <property type="entry name" value="Elp3/MiaA/NifB-like_rSAM"/>
</dbReference>
<dbReference type="InterPro" id="IPR007197">
    <property type="entry name" value="rSAM"/>
</dbReference>
<dbReference type="NCBIfam" id="TIGR00433">
    <property type="entry name" value="bioB"/>
    <property type="match status" value="1"/>
</dbReference>
<dbReference type="PANTHER" id="PTHR22976">
    <property type="entry name" value="BIOTIN SYNTHASE"/>
    <property type="match status" value="1"/>
</dbReference>
<dbReference type="PANTHER" id="PTHR22976:SF2">
    <property type="entry name" value="BIOTIN SYNTHASE, MITOCHONDRIAL"/>
    <property type="match status" value="1"/>
</dbReference>
<dbReference type="Pfam" id="PF06968">
    <property type="entry name" value="BATS"/>
    <property type="match status" value="1"/>
</dbReference>
<dbReference type="Pfam" id="PF04055">
    <property type="entry name" value="Radical_SAM"/>
    <property type="match status" value="1"/>
</dbReference>
<dbReference type="PIRSF" id="PIRSF001619">
    <property type="entry name" value="Biotin_synth"/>
    <property type="match status" value="1"/>
</dbReference>
<dbReference type="SFLD" id="SFLDG01060">
    <property type="entry name" value="BATS_domain_containing"/>
    <property type="match status" value="1"/>
</dbReference>
<dbReference type="SFLD" id="SFLDF00272">
    <property type="entry name" value="biotin_synthase"/>
    <property type="match status" value="1"/>
</dbReference>
<dbReference type="SMART" id="SM00876">
    <property type="entry name" value="BATS"/>
    <property type="match status" value="1"/>
</dbReference>
<dbReference type="SMART" id="SM00729">
    <property type="entry name" value="Elp3"/>
    <property type="match status" value="1"/>
</dbReference>
<dbReference type="SUPFAM" id="SSF102114">
    <property type="entry name" value="Radical SAM enzymes"/>
    <property type="match status" value="1"/>
</dbReference>
<dbReference type="PROSITE" id="PS51918">
    <property type="entry name" value="RADICAL_SAM"/>
    <property type="match status" value="1"/>
</dbReference>
<comment type="function">
    <text evidence="1">Catalyzes the conversion of dethiobiotin (DTB) to biotin by the insertion of a sulfur atom into dethiobiotin via a radical-based mechanism.</text>
</comment>
<comment type="catalytic activity">
    <reaction evidence="1">
        <text>(4R,5S)-dethiobiotin + (sulfur carrier)-SH + 2 reduced [2Fe-2S]-[ferredoxin] + 2 S-adenosyl-L-methionine = (sulfur carrier)-H + biotin + 2 5'-deoxyadenosine + 2 L-methionine + 2 oxidized [2Fe-2S]-[ferredoxin]</text>
        <dbReference type="Rhea" id="RHEA:22060"/>
        <dbReference type="Rhea" id="RHEA-COMP:10000"/>
        <dbReference type="Rhea" id="RHEA-COMP:10001"/>
        <dbReference type="Rhea" id="RHEA-COMP:14737"/>
        <dbReference type="Rhea" id="RHEA-COMP:14739"/>
        <dbReference type="ChEBI" id="CHEBI:17319"/>
        <dbReference type="ChEBI" id="CHEBI:29917"/>
        <dbReference type="ChEBI" id="CHEBI:33737"/>
        <dbReference type="ChEBI" id="CHEBI:33738"/>
        <dbReference type="ChEBI" id="CHEBI:57586"/>
        <dbReference type="ChEBI" id="CHEBI:57844"/>
        <dbReference type="ChEBI" id="CHEBI:59789"/>
        <dbReference type="ChEBI" id="CHEBI:64428"/>
        <dbReference type="ChEBI" id="CHEBI:149473"/>
        <dbReference type="EC" id="2.8.1.6"/>
    </reaction>
</comment>
<comment type="cofactor">
    <cofactor evidence="1">
        <name>[4Fe-4S] cluster</name>
        <dbReference type="ChEBI" id="CHEBI:49883"/>
    </cofactor>
    <text evidence="1">Binds 1 [4Fe-4S] cluster. The cluster is coordinated with 3 cysteines and an exchangeable S-adenosyl-L-methionine.</text>
</comment>
<comment type="cofactor">
    <cofactor evidence="1">
        <name>[2Fe-2S] cluster</name>
        <dbReference type="ChEBI" id="CHEBI:190135"/>
    </cofactor>
    <text evidence="1">Binds 1 [2Fe-2S] cluster. The cluster is coordinated with 3 cysteines and 1 arginine.</text>
</comment>
<comment type="pathway">
    <text evidence="1">Cofactor biosynthesis; biotin biosynthesis; biotin from 7,8-diaminononanoate: step 2/2.</text>
</comment>
<comment type="subunit">
    <text evidence="1">Homodimer.</text>
</comment>
<comment type="similarity">
    <text evidence="1">Belongs to the radical SAM superfamily. Biotin synthase family.</text>
</comment>
<proteinExistence type="inferred from homology"/>
<sequence>MQGAPLRHDWTREEAEVLYALPFPDLMFLAQATHRRHFDPTRLETASLLSIKTGGCPEDCGYCSQSAHYDTGLKATKLMDQDAVVATARRAKEAGADRFCMAAAWRNPKDRDLDQVCDMVSAVKDLGMETCVTLGMLTPPQAARLKQAGLDYYNHNVDTSPEFYDRIITTRTMQDRIDTLANVREAGIKVCCGGIIGMGEEVDDRLGMLVLLANLDAHPDSVPINMWNEVKGVPVNDTAERPDGIALARLIAVARIMMPRSVVRLSAGRQYMSDELQSLCLLAGANSIFIGDVLLTTANPQAERDADLLTRLGMTSSLSARSVAAVDENVSANA</sequence>
<organism>
    <name type="scientific">Bradyrhizobium sp. (strain ORS 278)</name>
    <dbReference type="NCBI Taxonomy" id="114615"/>
    <lineage>
        <taxon>Bacteria</taxon>
        <taxon>Pseudomonadati</taxon>
        <taxon>Pseudomonadota</taxon>
        <taxon>Alphaproteobacteria</taxon>
        <taxon>Hyphomicrobiales</taxon>
        <taxon>Nitrobacteraceae</taxon>
        <taxon>Bradyrhizobium</taxon>
    </lineage>
</organism>
<feature type="chain" id="PRO_0000381246" description="Biotin synthase">
    <location>
        <begin position="1"/>
        <end position="334"/>
    </location>
</feature>
<feature type="domain" description="Radical SAM core" evidence="2">
    <location>
        <begin position="41"/>
        <end position="260"/>
    </location>
</feature>
<feature type="binding site" evidence="1">
    <location>
        <position position="56"/>
    </location>
    <ligand>
        <name>[4Fe-4S] cluster</name>
        <dbReference type="ChEBI" id="CHEBI:49883"/>
        <note>4Fe-4S-S-AdoMet</note>
    </ligand>
</feature>
<feature type="binding site" evidence="1">
    <location>
        <position position="60"/>
    </location>
    <ligand>
        <name>[4Fe-4S] cluster</name>
        <dbReference type="ChEBI" id="CHEBI:49883"/>
        <note>4Fe-4S-S-AdoMet</note>
    </ligand>
</feature>
<feature type="binding site" evidence="1">
    <location>
        <position position="63"/>
    </location>
    <ligand>
        <name>[4Fe-4S] cluster</name>
        <dbReference type="ChEBI" id="CHEBI:49883"/>
        <note>4Fe-4S-S-AdoMet</note>
    </ligand>
</feature>
<feature type="binding site" evidence="1">
    <location>
        <position position="100"/>
    </location>
    <ligand>
        <name>[2Fe-2S] cluster</name>
        <dbReference type="ChEBI" id="CHEBI:190135"/>
    </ligand>
</feature>
<feature type="binding site" evidence="1">
    <location>
        <position position="131"/>
    </location>
    <ligand>
        <name>[2Fe-2S] cluster</name>
        <dbReference type="ChEBI" id="CHEBI:190135"/>
    </ligand>
</feature>
<feature type="binding site" evidence="1">
    <location>
        <position position="191"/>
    </location>
    <ligand>
        <name>[2Fe-2S] cluster</name>
        <dbReference type="ChEBI" id="CHEBI:190135"/>
    </ligand>
</feature>
<feature type="binding site" evidence="1">
    <location>
        <position position="264"/>
    </location>
    <ligand>
        <name>[2Fe-2S] cluster</name>
        <dbReference type="ChEBI" id="CHEBI:190135"/>
    </ligand>
</feature>
<accession>A4YQS3</accession>
<gene>
    <name evidence="1" type="primary">bioB</name>
    <name type="ordered locus">BRADO2424</name>
</gene>
<keyword id="KW-0001">2Fe-2S</keyword>
<keyword id="KW-0004">4Fe-4S</keyword>
<keyword id="KW-0093">Biotin biosynthesis</keyword>
<keyword id="KW-0408">Iron</keyword>
<keyword id="KW-0411">Iron-sulfur</keyword>
<keyword id="KW-0479">Metal-binding</keyword>
<keyword id="KW-1185">Reference proteome</keyword>
<keyword id="KW-0949">S-adenosyl-L-methionine</keyword>
<keyword id="KW-0808">Transferase</keyword>